<gene>
    <name type="primary">sthA</name>
    <name type="ordered locus">MT2786</name>
</gene>
<keyword id="KW-0963">Cytoplasm</keyword>
<keyword id="KW-0274">FAD</keyword>
<keyword id="KW-0285">Flavoprotein</keyword>
<keyword id="KW-0520">NAD</keyword>
<keyword id="KW-0521">NADP</keyword>
<keyword id="KW-0560">Oxidoreductase</keyword>
<keyword id="KW-1185">Reference proteome</keyword>
<organism>
    <name type="scientific">Mycobacterium tuberculosis (strain CDC 1551 / Oshkosh)</name>
    <dbReference type="NCBI Taxonomy" id="83331"/>
    <lineage>
        <taxon>Bacteria</taxon>
        <taxon>Bacillati</taxon>
        <taxon>Actinomycetota</taxon>
        <taxon>Actinomycetes</taxon>
        <taxon>Mycobacteriales</taxon>
        <taxon>Mycobacteriaceae</taxon>
        <taxon>Mycobacterium</taxon>
        <taxon>Mycobacterium tuberculosis complex</taxon>
    </lineage>
</organism>
<sequence length="468" mass="50754">MREYDIVVIGSGPGGQKAAIASAKLGKSVAIVERGRMLGGVCVNTGTIPSKTLREAVLYLTGMNQRELYGASYRVKDRITPADLLARTQHVIGKEVDVVRNQLMRNRVDLIVGHGRFIDPHTILVEDQARREKTTVTGDYIIIATGTRPARPSGVEFDEERVLDSDGILDLKSLPSSMVVVGAGVIGIEYASMFAALGTKVTVVEKRDNMLDFCDPEVVEALKFHLRDLAVTFRFGEEVTAVDVGSAGTVTTLASGKQIPAETVMYSAGRQGQTDHLDLHNAGLEVQGRGRIFVDDRFQTKVDHIYAVGDVIGFPALAATSMEQGRLAAYHAFGEPTDGITELQPIGIYSIPEVSYVGATEVELTKSSIPYEVGVARYRELARGQIAGDSYGMLKLLVSTEDLKLLGVHIFGTSATEMVHIGQAVMGCGGSVEYLVDAVFNYPTFSEAYKNAALDVMNKMRALNQFRR</sequence>
<evidence type="ECO:0000250" key="1"/>
<evidence type="ECO:0000305" key="2"/>
<proteinExistence type="inferred from homology"/>
<reference key="1">
    <citation type="journal article" date="2002" name="J. Bacteriol.">
        <title>Whole-genome comparison of Mycobacterium tuberculosis clinical and laboratory strains.</title>
        <authorList>
            <person name="Fleischmann R.D."/>
            <person name="Alland D."/>
            <person name="Eisen J.A."/>
            <person name="Carpenter L."/>
            <person name="White O."/>
            <person name="Peterson J.D."/>
            <person name="DeBoy R.T."/>
            <person name="Dodson R.J."/>
            <person name="Gwinn M.L."/>
            <person name="Haft D.H."/>
            <person name="Hickey E.K."/>
            <person name="Kolonay J.F."/>
            <person name="Nelson W.C."/>
            <person name="Umayam L.A."/>
            <person name="Ermolaeva M.D."/>
            <person name="Salzberg S.L."/>
            <person name="Delcher A."/>
            <person name="Utterback T.R."/>
            <person name="Weidman J.F."/>
            <person name="Khouri H.M."/>
            <person name="Gill J."/>
            <person name="Mikula A."/>
            <person name="Bishai W."/>
            <person name="Jacobs W.R. Jr."/>
            <person name="Venter J.C."/>
            <person name="Fraser C.M."/>
        </authorList>
    </citation>
    <scope>NUCLEOTIDE SEQUENCE [LARGE SCALE GENOMIC DNA]</scope>
    <source>
        <strain>CDC 1551 / Oshkosh</strain>
    </source>
</reference>
<dbReference type="EC" id="1.6.1.1"/>
<dbReference type="EMBL" id="AE000516">
    <property type="protein sequence ID" value="AAK47102.1"/>
    <property type="molecule type" value="Genomic_DNA"/>
</dbReference>
<dbReference type="PIR" id="D70532">
    <property type="entry name" value="D70532"/>
</dbReference>
<dbReference type="RefSeq" id="WP_003900556.1">
    <property type="nucleotide sequence ID" value="NZ_KK341227.1"/>
</dbReference>
<dbReference type="SMR" id="P9WHH4"/>
<dbReference type="GeneID" id="45426700"/>
<dbReference type="KEGG" id="mtc:MT2786"/>
<dbReference type="PATRIC" id="fig|83331.31.peg.2999"/>
<dbReference type="HOGENOM" id="CLU_016755_0_0_11"/>
<dbReference type="Proteomes" id="UP000001020">
    <property type="component" value="Chromosome"/>
</dbReference>
<dbReference type="GO" id="GO:0005829">
    <property type="term" value="C:cytosol"/>
    <property type="evidence" value="ECO:0007669"/>
    <property type="project" value="TreeGrafter"/>
</dbReference>
<dbReference type="GO" id="GO:0004148">
    <property type="term" value="F:dihydrolipoyl dehydrogenase (NADH) activity"/>
    <property type="evidence" value="ECO:0007669"/>
    <property type="project" value="TreeGrafter"/>
</dbReference>
<dbReference type="GO" id="GO:0050660">
    <property type="term" value="F:flavin adenine dinucleotide binding"/>
    <property type="evidence" value="ECO:0007669"/>
    <property type="project" value="TreeGrafter"/>
</dbReference>
<dbReference type="GO" id="GO:0003957">
    <property type="term" value="F:NAD(P)+ transhydrogenase (Si-specific) activity"/>
    <property type="evidence" value="ECO:0007669"/>
    <property type="project" value="UniProtKB-UniRule"/>
</dbReference>
<dbReference type="GO" id="GO:0006103">
    <property type="term" value="P:2-oxoglutarate metabolic process"/>
    <property type="evidence" value="ECO:0007669"/>
    <property type="project" value="TreeGrafter"/>
</dbReference>
<dbReference type="GO" id="GO:0006739">
    <property type="term" value="P:NADP metabolic process"/>
    <property type="evidence" value="ECO:0007669"/>
    <property type="project" value="UniProtKB-UniRule"/>
</dbReference>
<dbReference type="FunFam" id="3.30.390.30:FF:000001">
    <property type="entry name" value="Dihydrolipoyl dehydrogenase"/>
    <property type="match status" value="1"/>
</dbReference>
<dbReference type="FunFam" id="3.50.50.60:FF:000008">
    <property type="entry name" value="Soluble pyridine nucleotide transhydrogenase"/>
    <property type="match status" value="1"/>
</dbReference>
<dbReference type="Gene3D" id="3.30.390.30">
    <property type="match status" value="1"/>
</dbReference>
<dbReference type="Gene3D" id="3.50.50.60">
    <property type="entry name" value="FAD/NAD(P)-binding domain"/>
    <property type="match status" value="2"/>
</dbReference>
<dbReference type="HAMAP" id="MF_00247">
    <property type="entry name" value="SthA"/>
    <property type="match status" value="1"/>
</dbReference>
<dbReference type="InterPro" id="IPR050151">
    <property type="entry name" value="Class-I_Pyr_Nuc-Dis_Oxidored"/>
</dbReference>
<dbReference type="InterPro" id="IPR036188">
    <property type="entry name" value="FAD/NAD-bd_sf"/>
</dbReference>
<dbReference type="InterPro" id="IPR023753">
    <property type="entry name" value="FAD/NAD-binding_dom"/>
</dbReference>
<dbReference type="InterPro" id="IPR016156">
    <property type="entry name" value="FAD/NAD-linked_Rdtase_dimer_sf"/>
</dbReference>
<dbReference type="InterPro" id="IPR001100">
    <property type="entry name" value="Pyr_nuc-diS_OxRdtase"/>
</dbReference>
<dbReference type="InterPro" id="IPR004099">
    <property type="entry name" value="Pyr_nucl-diS_OxRdtase_dimer"/>
</dbReference>
<dbReference type="InterPro" id="IPR022962">
    <property type="entry name" value="STH_gammaproteobact"/>
</dbReference>
<dbReference type="NCBIfam" id="NF003585">
    <property type="entry name" value="PRK05249.1"/>
    <property type="match status" value="1"/>
</dbReference>
<dbReference type="PANTHER" id="PTHR22912">
    <property type="entry name" value="DISULFIDE OXIDOREDUCTASE"/>
    <property type="match status" value="1"/>
</dbReference>
<dbReference type="PANTHER" id="PTHR22912:SF93">
    <property type="entry name" value="SOLUBLE PYRIDINE NUCLEOTIDE TRANSHYDROGENASE"/>
    <property type="match status" value="1"/>
</dbReference>
<dbReference type="Pfam" id="PF07992">
    <property type="entry name" value="Pyr_redox_2"/>
    <property type="match status" value="1"/>
</dbReference>
<dbReference type="Pfam" id="PF02852">
    <property type="entry name" value="Pyr_redox_dim"/>
    <property type="match status" value="1"/>
</dbReference>
<dbReference type="PIRSF" id="PIRSF000350">
    <property type="entry name" value="Mercury_reductase_MerA"/>
    <property type="match status" value="1"/>
</dbReference>
<dbReference type="PRINTS" id="PR00368">
    <property type="entry name" value="FADPNR"/>
</dbReference>
<dbReference type="PRINTS" id="PR00411">
    <property type="entry name" value="PNDRDTASEI"/>
</dbReference>
<dbReference type="SUPFAM" id="SSF51905">
    <property type="entry name" value="FAD/NAD(P)-binding domain"/>
    <property type="match status" value="1"/>
</dbReference>
<dbReference type="SUPFAM" id="SSF55424">
    <property type="entry name" value="FAD/NAD-linked reductases, dimerisation (C-terminal) domain"/>
    <property type="match status" value="1"/>
</dbReference>
<comment type="function">
    <text evidence="1">Conversion of NADPH, generated by peripheral catabolic pathways, to NADH, which can enter the respiratory chain for energy generation.</text>
</comment>
<comment type="catalytic activity">
    <reaction>
        <text>NAD(+) + NADPH = NADH + NADP(+)</text>
        <dbReference type="Rhea" id="RHEA:11692"/>
        <dbReference type="ChEBI" id="CHEBI:57540"/>
        <dbReference type="ChEBI" id="CHEBI:57783"/>
        <dbReference type="ChEBI" id="CHEBI:57945"/>
        <dbReference type="ChEBI" id="CHEBI:58349"/>
        <dbReference type="EC" id="1.6.1.1"/>
    </reaction>
</comment>
<comment type="cofactor">
    <cofactor evidence="1">
        <name>FAD</name>
        <dbReference type="ChEBI" id="CHEBI:57692"/>
    </cofactor>
    <text evidence="1">Binds 1 FAD per subunit.</text>
</comment>
<comment type="subcellular location">
    <subcellularLocation>
        <location evidence="1">Cytoplasm</location>
    </subcellularLocation>
</comment>
<comment type="similarity">
    <text evidence="2">Belongs to the class-I pyridine nucleotide-disulfide oxidoreductase family.</text>
</comment>
<protein>
    <recommendedName>
        <fullName>Probable soluble pyridine nucleotide transhydrogenase</fullName>
        <shortName>STH</shortName>
        <ecNumber>1.6.1.1</ecNumber>
    </recommendedName>
    <alternativeName>
        <fullName>NAD(P)(+) transhydrogenase [B-specific]</fullName>
    </alternativeName>
</protein>
<name>STHA_MYCTO</name>
<feature type="chain" id="PRO_0000428186" description="Probable soluble pyridine nucleotide transhydrogenase">
    <location>
        <begin position="1"/>
        <end position="468"/>
    </location>
</feature>
<feature type="binding site" evidence="1">
    <location>
        <begin position="33"/>
        <end position="42"/>
    </location>
    <ligand>
        <name>FAD</name>
        <dbReference type="ChEBI" id="CHEBI:57692"/>
    </ligand>
</feature>
<accession>P9WHH4</accession>
<accession>L0TAN4</accession>
<accession>O07212</accession>
<accession>P66006</accession>